<protein>
    <recommendedName>
        <fullName evidence="1">Thymidylate synthase</fullName>
        <shortName evidence="1">TS</shortName>
        <shortName evidence="1">TSase</shortName>
        <ecNumber evidence="1">2.1.1.45</ecNumber>
    </recommendedName>
</protein>
<comment type="function">
    <text evidence="1">Catalyzes the reductive methylation of 2'-deoxyuridine-5'-monophosphate (dUMP) to 2'-deoxythymidine-5'-monophosphate (dTMP) while utilizing 5,10-methylenetetrahydrofolate (mTHF) as the methyl donor and reductant in the reaction, yielding dihydrofolate (DHF) as a by-product. This enzymatic reaction provides an intracellular de novo source of dTMP, an essential precursor for DNA biosynthesis.</text>
</comment>
<comment type="catalytic activity">
    <reaction evidence="1">
        <text>dUMP + (6R)-5,10-methylene-5,6,7,8-tetrahydrofolate = 7,8-dihydrofolate + dTMP</text>
        <dbReference type="Rhea" id="RHEA:12104"/>
        <dbReference type="ChEBI" id="CHEBI:15636"/>
        <dbReference type="ChEBI" id="CHEBI:57451"/>
        <dbReference type="ChEBI" id="CHEBI:63528"/>
        <dbReference type="ChEBI" id="CHEBI:246422"/>
        <dbReference type="EC" id="2.1.1.45"/>
    </reaction>
</comment>
<comment type="pathway">
    <text evidence="1">Pyrimidine metabolism; dTTP biosynthesis.</text>
</comment>
<comment type="subunit">
    <text evidence="1">Homodimer.</text>
</comment>
<comment type="subcellular location">
    <subcellularLocation>
        <location evidence="1">Cytoplasm</location>
    </subcellularLocation>
</comment>
<comment type="similarity">
    <text evidence="1">Belongs to the thymidylate synthase family. Bacterial-type ThyA subfamily.</text>
</comment>
<accession>A5II41</accession>
<evidence type="ECO:0000255" key="1">
    <source>
        <dbReference type="HAMAP-Rule" id="MF_00008"/>
    </source>
</evidence>
<proteinExistence type="inferred from homology"/>
<reference key="1">
    <citation type="submission" date="2006-11" db="EMBL/GenBank/DDBJ databases">
        <title>Identification and characterization of a new conjugation/ type IVA secretion system (trb/tra) of L. pneumophila Corby localized on a mobile genomic island.</title>
        <authorList>
            <person name="Gloeckner G."/>
            <person name="Albert-Weissenberger C."/>
            <person name="Weinmann E."/>
            <person name="Jacobi S."/>
            <person name="Schunder E."/>
            <person name="Steinert M."/>
            <person name="Buchrieser C."/>
            <person name="Hacker J."/>
            <person name="Heuner K."/>
        </authorList>
    </citation>
    <scope>NUCLEOTIDE SEQUENCE [LARGE SCALE GENOMIC DNA]</scope>
    <source>
        <strain>Corby</strain>
    </source>
</reference>
<gene>
    <name evidence="1" type="primary">thyA</name>
    <name type="ordered locus">LPC_3154</name>
</gene>
<sequence>MKTYLQLLEHILQQGVEKSDRTGTGTLSVFGYQMRFDLTKGFPLVTTKKLHTRSIVHELLWFLRGDTNISYLKENGVTIWDEWADNNGDLGPVYGKQWRSWPTADGHTIDQLSDVVQQIKSNPDSRRLIVSAWNVGELDKMALMPCHALFQFYVANNKLSCQLYQRSADVFLGVPFNIASYSLLTHMVAQQCNLDVAEFIWTGGDCHLYLNHLEQAQIQLTREPLPLPSLTIKRKPASLFDYAYEDFEFVNYQSHPAIKAPIAV</sequence>
<keyword id="KW-0963">Cytoplasm</keyword>
<keyword id="KW-0489">Methyltransferase</keyword>
<keyword id="KW-0545">Nucleotide biosynthesis</keyword>
<keyword id="KW-0808">Transferase</keyword>
<feature type="chain" id="PRO_1000000620" description="Thymidylate synthase">
    <location>
        <begin position="1"/>
        <end position="264"/>
    </location>
</feature>
<feature type="active site" description="Nucleophile" evidence="1">
    <location>
        <position position="146"/>
    </location>
</feature>
<feature type="binding site" description="in other chain" evidence="1">
    <location>
        <position position="21"/>
    </location>
    <ligand>
        <name>dUMP</name>
        <dbReference type="ChEBI" id="CHEBI:246422"/>
        <note>ligand shared between dimeric partners</note>
    </ligand>
</feature>
<feature type="binding site" evidence="1">
    <location>
        <position position="51"/>
    </location>
    <ligand>
        <name>(6R)-5,10-methylene-5,6,7,8-tetrahydrofolate</name>
        <dbReference type="ChEBI" id="CHEBI:15636"/>
    </ligand>
</feature>
<feature type="binding site" evidence="1">
    <location>
        <begin position="126"/>
        <end position="127"/>
    </location>
    <ligand>
        <name>dUMP</name>
        <dbReference type="ChEBI" id="CHEBI:246422"/>
        <note>ligand shared between dimeric partners</note>
    </ligand>
</feature>
<feature type="binding site" description="in other chain" evidence="1">
    <location>
        <begin position="166"/>
        <end position="169"/>
    </location>
    <ligand>
        <name>dUMP</name>
        <dbReference type="ChEBI" id="CHEBI:246422"/>
        <note>ligand shared between dimeric partners</note>
    </ligand>
</feature>
<feature type="binding site" evidence="1">
    <location>
        <position position="169"/>
    </location>
    <ligand>
        <name>(6R)-5,10-methylene-5,6,7,8-tetrahydrofolate</name>
        <dbReference type="ChEBI" id="CHEBI:15636"/>
    </ligand>
</feature>
<feature type="binding site" description="in other chain" evidence="1">
    <location>
        <position position="177"/>
    </location>
    <ligand>
        <name>dUMP</name>
        <dbReference type="ChEBI" id="CHEBI:246422"/>
        <note>ligand shared between dimeric partners</note>
    </ligand>
</feature>
<feature type="binding site" description="in other chain" evidence="1">
    <location>
        <begin position="207"/>
        <end position="209"/>
    </location>
    <ligand>
        <name>dUMP</name>
        <dbReference type="ChEBI" id="CHEBI:246422"/>
        <note>ligand shared between dimeric partners</note>
    </ligand>
</feature>
<feature type="binding site" evidence="1">
    <location>
        <position position="263"/>
    </location>
    <ligand>
        <name>(6R)-5,10-methylene-5,6,7,8-tetrahydrofolate</name>
        <dbReference type="ChEBI" id="CHEBI:15636"/>
    </ligand>
</feature>
<dbReference type="EC" id="2.1.1.45" evidence="1"/>
<dbReference type="EMBL" id="CP000675">
    <property type="protein sequence ID" value="ABQ57041.1"/>
    <property type="molecule type" value="Genomic_DNA"/>
</dbReference>
<dbReference type="RefSeq" id="WP_011947748.1">
    <property type="nucleotide sequence ID" value="NC_009494.2"/>
</dbReference>
<dbReference type="SMR" id="A5II41"/>
<dbReference type="KEGG" id="lpc:LPC_3154"/>
<dbReference type="HOGENOM" id="CLU_021669_0_0_6"/>
<dbReference type="UniPathway" id="UPA00575"/>
<dbReference type="GO" id="GO:0005829">
    <property type="term" value="C:cytosol"/>
    <property type="evidence" value="ECO:0007669"/>
    <property type="project" value="TreeGrafter"/>
</dbReference>
<dbReference type="GO" id="GO:0004799">
    <property type="term" value="F:thymidylate synthase activity"/>
    <property type="evidence" value="ECO:0007669"/>
    <property type="project" value="UniProtKB-UniRule"/>
</dbReference>
<dbReference type="GO" id="GO:0006231">
    <property type="term" value="P:dTMP biosynthetic process"/>
    <property type="evidence" value="ECO:0007669"/>
    <property type="project" value="UniProtKB-UniRule"/>
</dbReference>
<dbReference type="GO" id="GO:0006235">
    <property type="term" value="P:dTTP biosynthetic process"/>
    <property type="evidence" value="ECO:0007669"/>
    <property type="project" value="UniProtKB-UniRule"/>
</dbReference>
<dbReference type="GO" id="GO:0032259">
    <property type="term" value="P:methylation"/>
    <property type="evidence" value="ECO:0007669"/>
    <property type="project" value="UniProtKB-KW"/>
</dbReference>
<dbReference type="CDD" id="cd00351">
    <property type="entry name" value="TS_Pyrimidine_HMase"/>
    <property type="match status" value="1"/>
</dbReference>
<dbReference type="FunFam" id="3.30.572.10:FF:000001">
    <property type="entry name" value="Thymidylate synthase"/>
    <property type="match status" value="1"/>
</dbReference>
<dbReference type="Gene3D" id="3.30.572.10">
    <property type="entry name" value="Thymidylate synthase/dCMP hydroxymethylase domain"/>
    <property type="match status" value="1"/>
</dbReference>
<dbReference type="HAMAP" id="MF_00008">
    <property type="entry name" value="Thymidy_synth_bact"/>
    <property type="match status" value="1"/>
</dbReference>
<dbReference type="InterPro" id="IPR045097">
    <property type="entry name" value="Thymidate_synth/dCMP_Mease"/>
</dbReference>
<dbReference type="InterPro" id="IPR023451">
    <property type="entry name" value="Thymidate_synth/dCMP_Mease_dom"/>
</dbReference>
<dbReference type="InterPro" id="IPR036926">
    <property type="entry name" value="Thymidate_synth/dCMP_Mease_sf"/>
</dbReference>
<dbReference type="InterPro" id="IPR000398">
    <property type="entry name" value="Thymidylate_synthase"/>
</dbReference>
<dbReference type="InterPro" id="IPR020940">
    <property type="entry name" value="Thymidylate_synthase_AS"/>
</dbReference>
<dbReference type="NCBIfam" id="NF002497">
    <property type="entry name" value="PRK01827.1-3"/>
    <property type="match status" value="1"/>
</dbReference>
<dbReference type="NCBIfam" id="NF002499">
    <property type="entry name" value="PRK01827.1-5"/>
    <property type="match status" value="1"/>
</dbReference>
<dbReference type="NCBIfam" id="TIGR03284">
    <property type="entry name" value="thym_sym"/>
    <property type="match status" value="2"/>
</dbReference>
<dbReference type="PANTHER" id="PTHR11548:SF9">
    <property type="entry name" value="THYMIDYLATE SYNTHASE"/>
    <property type="match status" value="1"/>
</dbReference>
<dbReference type="PANTHER" id="PTHR11548">
    <property type="entry name" value="THYMIDYLATE SYNTHASE 1"/>
    <property type="match status" value="1"/>
</dbReference>
<dbReference type="Pfam" id="PF00303">
    <property type="entry name" value="Thymidylat_synt"/>
    <property type="match status" value="1"/>
</dbReference>
<dbReference type="PRINTS" id="PR00108">
    <property type="entry name" value="THYMDSNTHASE"/>
</dbReference>
<dbReference type="SUPFAM" id="SSF55831">
    <property type="entry name" value="Thymidylate synthase/dCMP hydroxymethylase"/>
    <property type="match status" value="1"/>
</dbReference>
<dbReference type="PROSITE" id="PS00091">
    <property type="entry name" value="THYMIDYLATE_SYNTHASE"/>
    <property type="match status" value="1"/>
</dbReference>
<name>TYSY_LEGPC</name>
<organism>
    <name type="scientific">Legionella pneumophila (strain Corby)</name>
    <dbReference type="NCBI Taxonomy" id="400673"/>
    <lineage>
        <taxon>Bacteria</taxon>
        <taxon>Pseudomonadati</taxon>
        <taxon>Pseudomonadota</taxon>
        <taxon>Gammaproteobacteria</taxon>
        <taxon>Legionellales</taxon>
        <taxon>Legionellaceae</taxon>
        <taxon>Legionella</taxon>
    </lineage>
</organism>